<feature type="chain" id="PRO_0000313721" description="DNA-binding protein RFX6">
    <location>
        <begin position="1"/>
        <end position="928"/>
    </location>
</feature>
<feature type="DNA-binding region" description="RFX-type winged-helix" evidence="2">
    <location>
        <begin position="124"/>
        <end position="199"/>
    </location>
</feature>
<feature type="region of interest" description="Disordered" evidence="3">
    <location>
        <begin position="1"/>
        <end position="20"/>
    </location>
</feature>
<feature type="region of interest" description="Disordered" evidence="3">
    <location>
        <begin position="50"/>
        <end position="98"/>
    </location>
</feature>
<feature type="sequence variant" id="VAR_037709" description="In dbSNP:rs17853900." evidence="4">
    <original>E</original>
    <variation>K</variation>
    <location>
        <position position="6"/>
    </location>
</feature>
<feature type="sequence variant" id="VAR_061768" description="In dbSNP:rs9489056.">
    <original>A</original>
    <variation>E</variation>
    <location>
        <position position="17"/>
    </location>
</feature>
<feature type="sequence variant" id="VAR_062978" description="In MTCHRS; abolishes DNA-binding; dbSNP:rs267607013." evidence="5">
    <original>R</original>
    <variation>Q</variation>
    <location>
        <position position="181"/>
    </location>
</feature>
<feature type="sequence variant" id="VAR_062979" description="In MTCHRS; induces a slight reduction in DNA-binding; in a patient still alive at age 4.5 years; dbSNP:rs267607012." evidence="5">
    <original>S</original>
    <variation>P</variation>
    <location>
        <position position="217"/>
    </location>
</feature>
<feature type="sequence variant" id="VAR_074215" description="In MTCHRS; inhibits the transactivation of the insulin and beta-cell L-type calcium channel genes." evidence="6">
    <original>V</original>
    <variation>G</variation>
    <location>
        <position position="506"/>
    </location>
</feature>
<feature type="sequence variant" id="VAR_037710" description="In dbSNP:rs17857184." evidence="4">
    <original>T</original>
    <variation>A</variation>
    <location>
        <position position="688"/>
    </location>
</feature>
<feature type="sequence variant" id="VAR_037711" description="In dbSNP:rs582803.">
    <original>S</original>
    <variation>N</variation>
    <location>
        <position position="743"/>
    </location>
</feature>
<evidence type="ECO:0000250" key="1">
    <source>
        <dbReference type="UniProtKB" id="Q8C7R7"/>
    </source>
</evidence>
<evidence type="ECO:0000255" key="2">
    <source>
        <dbReference type="PROSITE-ProRule" id="PRU00858"/>
    </source>
</evidence>
<evidence type="ECO:0000256" key="3">
    <source>
        <dbReference type="SAM" id="MobiDB-lite"/>
    </source>
</evidence>
<evidence type="ECO:0000269" key="4">
    <source>
    </source>
</evidence>
<evidence type="ECO:0000269" key="5">
    <source>
    </source>
</evidence>
<evidence type="ECO:0000269" key="6">
    <source>
    </source>
</evidence>
<comment type="function">
    <text evidence="5 6">Transcription factor required to direct islet cell differentiation during endocrine pancreas development. Specifically required for the differentiation of 4 of the 5 islet cell types and for the production of insulin (PubMed:20148032, PubMed:25497100). Not required for pancreatic PP (polypeptide-producing) cells differentiation. Acts downstream of NEUROG3 and regulates the transcription factors involved in beta-cell maturation and function, thereby restricting the expression of the beta-cell differentiation and specification genes, and thus the beta-cell fate choice. Activates transcription by forming a heterodimer with RFX3 and binding to the X-box in the promoter of target genes (PubMed:20148032). Involved in glucose-stimulated insulin secretion by promoting insulin and L-type calcium channel gene transcription (PubMed:25497100).</text>
</comment>
<comment type="subunit">
    <text evidence="1">Interacts with RFX3.</text>
</comment>
<comment type="interaction">
    <interactant intactId="EBI-746118">
        <id>Q8HWS3</id>
    </interactant>
    <interactant intactId="EBI-727098">
        <id>P21549</id>
        <label>AGXT</label>
    </interactant>
    <organismsDiffer>false</organismsDiffer>
    <experiments>3</experiments>
</comment>
<comment type="interaction">
    <interactant intactId="EBI-746118">
        <id>Q8HWS3</id>
    </interactant>
    <interactant intactId="EBI-744545">
        <id>Q8NEC5</id>
        <label>CATSPER1</label>
    </interactant>
    <organismsDiffer>false</organismsDiffer>
    <experiments>6</experiments>
</comment>
<comment type="interaction">
    <interactant intactId="EBI-746118">
        <id>Q8HWS3</id>
    </interactant>
    <interactant intactId="EBI-711360">
        <id>P33240</id>
        <label>CSTF2</label>
    </interactant>
    <organismsDiffer>false</organismsDiffer>
    <experiments>3</experiments>
</comment>
<comment type="interaction">
    <interactant intactId="EBI-746118">
        <id>Q8HWS3</id>
    </interactant>
    <interactant intactId="EBI-9679045">
        <id>Q9NQL9</id>
        <label>DMRT3</label>
    </interactant>
    <organismsDiffer>false</organismsDiffer>
    <experiments>3</experiments>
</comment>
<comment type="interaction">
    <interactant intactId="EBI-746118">
        <id>Q8HWS3</id>
    </interactant>
    <interactant intactId="EBI-740376">
        <id>Q86UW9</id>
        <label>DTX2</label>
    </interactant>
    <organismsDiffer>false</organismsDiffer>
    <experiments>4</experiments>
</comment>
<comment type="interaction">
    <interactant intactId="EBI-746118">
        <id>Q8HWS3</id>
    </interactant>
    <interactant intactId="EBI-7357329">
        <id>Q9H596</id>
        <label>DUSP21</label>
    </interactant>
    <organismsDiffer>false</organismsDiffer>
    <experiments>3</experiments>
</comment>
<comment type="interaction">
    <interactant intactId="EBI-746118">
        <id>Q8HWS3</id>
    </interactant>
    <interactant intactId="EBI-725515">
        <id>O43559</id>
        <label>FRS3</label>
    </interactant>
    <organismsDiffer>false</organismsDiffer>
    <experiments>6</experiments>
</comment>
<comment type="interaction">
    <interactant intactId="EBI-746118">
        <id>Q8HWS3</id>
    </interactant>
    <interactant intactId="EBI-16429135">
        <id>A0A0S2Z4Q4</id>
        <label>HGS</label>
    </interactant>
    <organismsDiffer>false</organismsDiffer>
    <experiments>3</experiments>
</comment>
<comment type="interaction">
    <interactant intactId="EBI-746118">
        <id>Q8HWS3</id>
    </interactant>
    <interactant intactId="EBI-740220">
        <id>O14964</id>
        <label>HGS</label>
    </interactant>
    <organismsDiffer>false</organismsDiffer>
    <experiments>3</experiments>
</comment>
<comment type="interaction">
    <interactant intactId="EBI-746118">
        <id>Q8HWS3</id>
    </interactant>
    <interactant intactId="EBI-4397613">
        <id>Q7L273</id>
        <label>KCTD9</label>
    </interactant>
    <organismsDiffer>false</organismsDiffer>
    <experiments>3</experiments>
</comment>
<comment type="interaction">
    <interactant intactId="EBI-746118">
        <id>Q8HWS3</id>
    </interactant>
    <interactant intactId="EBI-720805">
        <id>P56470</id>
        <label>LGALS4</label>
    </interactant>
    <organismsDiffer>false</organismsDiffer>
    <experiments>3</experiments>
</comment>
<comment type="interaction">
    <interactant intactId="EBI-746118">
        <id>Q8HWS3</id>
    </interactant>
    <interactant intactId="EBI-1104564">
        <id>Q9Y316</id>
        <label>MEMO1</label>
    </interactant>
    <organismsDiffer>false</organismsDiffer>
    <experiments>3</experiments>
</comment>
<comment type="interaction">
    <interactant intactId="EBI-746118">
        <id>Q8HWS3</id>
    </interactant>
    <interactant intactId="EBI-2108053">
        <id>Q14511</id>
        <label>NEDD9</label>
    </interactant>
    <organismsDiffer>false</organismsDiffer>
    <experiments>3</experiments>
</comment>
<comment type="interaction">
    <interactant intactId="EBI-746118">
        <id>Q8HWS3</id>
    </interactant>
    <interactant intactId="EBI-11746523">
        <id>Q14511-2</id>
        <label>NEDD9</label>
    </interactant>
    <organismsDiffer>false</organismsDiffer>
    <experiments>3</experiments>
</comment>
<comment type="interaction">
    <interactant intactId="EBI-746118">
        <id>Q8HWS3</id>
    </interactant>
    <interactant intactId="EBI-11022007">
        <id>Q9HBE1-4</id>
        <label>PATZ1</label>
    </interactant>
    <organismsDiffer>false</organismsDiffer>
    <experiments>3</experiments>
</comment>
<comment type="interaction">
    <interactant intactId="EBI-746118">
        <id>Q8HWS3</id>
    </interactant>
    <interactant intactId="EBI-10241513">
        <id>Q494U1</id>
        <label>PLEKHN1</label>
    </interactant>
    <organismsDiffer>false</organismsDiffer>
    <experiments>3</experiments>
</comment>
<comment type="interaction">
    <interactant intactId="EBI-746118">
        <id>Q8HWS3</id>
    </interactant>
    <interactant intactId="EBI-1181405">
        <id>Q13131</id>
        <label>PRKAA1</label>
    </interactant>
    <organismsDiffer>false</organismsDiffer>
    <experiments>3</experiments>
</comment>
<comment type="interaction">
    <interactant intactId="EBI-746118">
        <id>Q8HWS3</id>
    </interactant>
    <interactant intactId="EBI-1383852">
        <id>P54646</id>
        <label>PRKAA2</label>
    </interactant>
    <organismsDiffer>false</organismsDiffer>
    <experiments>3</experiments>
</comment>
<comment type="interaction">
    <interactant intactId="EBI-746118">
        <id>Q8HWS3</id>
    </interactant>
    <interactant intactId="EBI-746731">
        <id>P48378</id>
        <label>RFX2</label>
    </interactant>
    <organismsDiffer>false</organismsDiffer>
    <experiments>4</experiments>
</comment>
<comment type="interaction">
    <interactant intactId="EBI-746118">
        <id>Q8HWS3</id>
    </interactant>
    <interactant intactId="EBI-12000762">
        <id>Q7Z5V6-2</id>
        <label>SAXO4</label>
    </interactant>
    <organismsDiffer>false</organismsDiffer>
    <experiments>3</experiments>
</comment>
<comment type="interaction">
    <interactant intactId="EBI-746118">
        <id>Q8HWS3</id>
    </interactant>
    <interactant intactId="EBI-372475">
        <id>P14678-2</id>
        <label>SNRPB</label>
    </interactant>
    <organismsDiffer>false</organismsDiffer>
    <experiments>6</experiments>
</comment>
<comment type="interaction">
    <interactant intactId="EBI-746118">
        <id>Q8HWS3</id>
    </interactant>
    <interactant intactId="EBI-10246938">
        <id>Q5TAL4</id>
        <label>SNRPC</label>
    </interactant>
    <organismsDiffer>false</organismsDiffer>
    <experiments>3</experiments>
</comment>
<comment type="interaction">
    <interactant intactId="EBI-746118">
        <id>Q8HWS3</id>
    </interactant>
    <interactant intactId="EBI-12035119">
        <id>O75177-5</id>
        <label>SS18L1</label>
    </interactant>
    <organismsDiffer>false</organismsDiffer>
    <experiments>3</experiments>
</comment>
<comment type="interaction">
    <interactant intactId="EBI-746118">
        <id>Q8HWS3</id>
    </interactant>
    <interactant intactId="EBI-749295">
        <id>O75716</id>
        <label>STK16</label>
    </interactant>
    <organismsDiffer>false</organismsDiffer>
    <experiments>3</experiments>
</comment>
<comment type="interaction">
    <interactant intactId="EBI-746118">
        <id>Q8HWS3</id>
    </interactant>
    <interactant intactId="EBI-8644516">
        <id>Q9BXF9</id>
        <label>TEKT3</label>
    </interactant>
    <organismsDiffer>false</organismsDiffer>
    <experiments>3</experiments>
</comment>
<comment type="interaction">
    <interactant intactId="EBI-746118">
        <id>Q8HWS3</id>
    </interactant>
    <interactant intactId="EBI-750487">
        <id>Q8WW24</id>
        <label>TEKT4</label>
    </interactant>
    <organismsDiffer>false</organismsDiffer>
    <experiments>3</experiments>
</comment>
<comment type="interaction">
    <interactant intactId="EBI-746118">
        <id>Q8HWS3</id>
    </interactant>
    <interactant intactId="EBI-752030">
        <id>Q96A09</id>
        <label>TENT5B</label>
    </interactant>
    <organismsDiffer>false</organismsDiffer>
    <experiments>3</experiments>
</comment>
<comment type="interaction">
    <interactant intactId="EBI-746118">
        <id>Q8HWS3</id>
    </interactant>
    <interactant intactId="EBI-717810">
        <id>Q08117</id>
        <label>TLE5</label>
    </interactant>
    <organismsDiffer>false</organismsDiffer>
    <experiments>3</experiments>
</comment>
<comment type="interaction">
    <interactant intactId="EBI-746118">
        <id>Q8HWS3</id>
    </interactant>
    <interactant intactId="EBI-743272">
        <id>O75604</id>
        <label>USP2</label>
    </interactant>
    <organismsDiffer>false</organismsDiffer>
    <experiments>3</experiments>
</comment>
<comment type="interaction">
    <interactant intactId="EBI-746118">
        <id>Q8HWS3</id>
    </interactant>
    <interactant intactId="EBI-2559305">
        <id>A5D8V6</id>
        <label>VPS37C</label>
    </interactant>
    <organismsDiffer>false</organismsDiffer>
    <experiments>3</experiments>
</comment>
<comment type="interaction">
    <interactant intactId="EBI-746118">
        <id>Q8HWS3</id>
    </interactant>
    <interactant intactId="EBI-746595">
        <id>Q96E35</id>
        <label>ZMYND19</label>
    </interactant>
    <organismsDiffer>false</organismsDiffer>
    <experiments>3</experiments>
</comment>
<comment type="interaction">
    <interactant intactId="EBI-746118">
        <id>Q8HWS3</id>
    </interactant>
    <interactant intactId="EBI-16429014">
        <id>A0A0S2Z5X4</id>
        <label>ZNF688</label>
    </interactant>
    <organismsDiffer>false</organismsDiffer>
    <experiments>3</experiments>
</comment>
<comment type="subcellular location">
    <subcellularLocation>
        <location evidence="6">Nucleus</location>
    </subcellularLocation>
</comment>
<comment type="tissue specificity">
    <text evidence="5 6">Expressed in pancreas (PubMed:25497100). Expressed in pancreatic beta-cells (insulin-positive cells) and alpha-cells (glucagon-positive cells) (at protein level). Specifically expressed in pancreas, small intestine and colon (PubMed:20148032). Expressed in endocrine cells in the islets (PubMed:25497100).</text>
</comment>
<comment type="disease" evidence="5 6">
    <disease id="DI-02515">
        <name>Mitchell-Riley syndrome</name>
        <acronym>MTCHRS</acronym>
        <description>A disorder characterized by neonatal diabetes, hypoplastic or annular pancreas, duodenal and jejunal atresia, and absent gallbladder. There is no dysmorphic features.</description>
        <dbReference type="MIM" id="615710"/>
    </disease>
    <text>The disease is caused by variants affecting the gene represented in this entry.</text>
</comment>
<comment type="similarity">
    <text evidence="2">Belongs to the RFX family.</text>
</comment>
<gene>
    <name type="primary">RFX6</name>
    <name type="synonym">RFXDC1</name>
</gene>
<sequence>MAKVPELEDTFLQAQPAPQLSPGIQEDCCVQLLGKGLLVYPEETVYLAAEGQPGGEQGGGEKGEDPELPGAVKSEMHLNNGNFSSEEEDADNHDSKTKAADQYLSQKKTITQIVKDKKKQTQLTLQWLEENYIVCEGVCLPRCILYAHYLDFCRKEKLEPACAATFGKTIRQKFPLLTTRRLGTRGHSKYHYYGIGIKESSAYYHSVYSGKGLTRFSGSKLKNEGGFTRKYSLSSKTGTLLPEFPSAQHLVYQGCISKDKVDTLIMMYKTHCQCILDNAINGNFEEIQHFLLHFWQGMPDHLLPLLENPVIIDIFCVCDSILYKVLTDVLIPATMQEMPESLLADIRNFAKNWEQWVVSSLENLPEALTDKKIPIVRRFVSSLKRQTSFLHLAQIARPALFDQHVVNSMVSDIERVDLNSIGSQALLTISGSTDTESGIYTEHDSITVFQELKDLLKKNATVEAFIEWLDTVVEQRVIKTSKQNGRSLKKRAQDFLLKWSFFGARVMHNLTLNNASSFGSFHLIRMLLDEYILLAMETQFNNDKEQELQNLLDKYMKNSDASKAAFTASPSSCFLANRNKGSMVSSDAVKNESHVETTYLPLPSSQPGGLGPALHQFPAGNTDNMPLTGQMELSQIAGHLMTPPISPAMASRGSVINQGPMAGRPPSVGPVLSAPSHCSTYPEPIYPTLPQANHDFYSTSSNYQTVFRAQPHSTSGLYPHHTEHGRCMAWTEQQLSRDFFSGSCAGSPYNSRPPSSYGPSLQAQDSHNMQFLNTGSFNFLSNTGAASCQGATLPPNSPNGYYGSNINYPESHRLGSMVNQHVSVISSIRSLPPYSDIHDPLNILDDSGRKQTSSFYTDTSSPVACRTPVLASSLQTPIPSSSSQCMYGTSNQYPAQETLDSHGTSSREMVSSLPPINTVFMGTAAGGT</sequence>
<organism>
    <name type="scientific">Homo sapiens</name>
    <name type="common">Human</name>
    <dbReference type="NCBI Taxonomy" id="9606"/>
    <lineage>
        <taxon>Eukaryota</taxon>
        <taxon>Metazoa</taxon>
        <taxon>Chordata</taxon>
        <taxon>Craniata</taxon>
        <taxon>Vertebrata</taxon>
        <taxon>Euteleostomi</taxon>
        <taxon>Mammalia</taxon>
        <taxon>Eutheria</taxon>
        <taxon>Euarchontoglires</taxon>
        <taxon>Primates</taxon>
        <taxon>Haplorrhini</taxon>
        <taxon>Catarrhini</taxon>
        <taxon>Hominidae</taxon>
        <taxon>Homo</taxon>
    </lineage>
</organism>
<dbReference type="EMBL" id="AL355272">
    <property type="status" value="NOT_ANNOTATED_CDS"/>
    <property type="molecule type" value="Genomic_DNA"/>
</dbReference>
<dbReference type="EMBL" id="CH471051">
    <property type="protein sequence ID" value="EAW48213.1"/>
    <property type="molecule type" value="Genomic_DNA"/>
</dbReference>
<dbReference type="EMBL" id="BC039248">
    <property type="protein sequence ID" value="AAH39248.1"/>
    <property type="molecule type" value="mRNA"/>
</dbReference>
<dbReference type="CCDS" id="CCDS5113.1"/>
<dbReference type="RefSeq" id="NP_775831.2">
    <property type="nucleotide sequence ID" value="NM_173560.4"/>
</dbReference>
<dbReference type="SMR" id="Q8HWS3"/>
<dbReference type="BioGRID" id="128803">
    <property type="interactions" value="43"/>
</dbReference>
<dbReference type="FunCoup" id="Q8HWS3">
    <property type="interactions" value="853"/>
</dbReference>
<dbReference type="IntAct" id="Q8HWS3">
    <property type="interactions" value="44"/>
</dbReference>
<dbReference type="MINT" id="Q8HWS3"/>
<dbReference type="STRING" id="9606.ENSP00000332208"/>
<dbReference type="iPTMnet" id="Q8HWS3"/>
<dbReference type="PhosphoSitePlus" id="Q8HWS3"/>
<dbReference type="BioMuta" id="RFX6"/>
<dbReference type="DMDM" id="166225159"/>
<dbReference type="jPOST" id="Q8HWS3"/>
<dbReference type="MassIVE" id="Q8HWS3"/>
<dbReference type="PaxDb" id="9606-ENSP00000332208"/>
<dbReference type="PeptideAtlas" id="Q8HWS3"/>
<dbReference type="ProteomicsDB" id="70500"/>
<dbReference type="Antibodypedia" id="32535">
    <property type="antibodies" value="76 antibodies from 19 providers"/>
</dbReference>
<dbReference type="DNASU" id="222546"/>
<dbReference type="Ensembl" id="ENST00000332958.3">
    <property type="protein sequence ID" value="ENSP00000332208.2"/>
    <property type="gene ID" value="ENSG00000185002.10"/>
</dbReference>
<dbReference type="GeneID" id="222546"/>
<dbReference type="KEGG" id="hsa:222546"/>
<dbReference type="MANE-Select" id="ENST00000332958.3">
    <property type="protein sequence ID" value="ENSP00000332208.2"/>
    <property type="RefSeq nucleotide sequence ID" value="NM_173560.4"/>
    <property type="RefSeq protein sequence ID" value="NP_775831.2"/>
</dbReference>
<dbReference type="UCSC" id="uc003pxm.4">
    <property type="organism name" value="human"/>
</dbReference>
<dbReference type="AGR" id="HGNC:21478"/>
<dbReference type="CTD" id="222546"/>
<dbReference type="DisGeNET" id="222546"/>
<dbReference type="GeneCards" id="RFX6"/>
<dbReference type="GeneReviews" id="RFX6"/>
<dbReference type="HGNC" id="HGNC:21478">
    <property type="gene designation" value="RFX6"/>
</dbReference>
<dbReference type="HPA" id="ENSG00000185002">
    <property type="expression patterns" value="Group enriched (adrenal gland, intestine, pancreas, stomach)"/>
</dbReference>
<dbReference type="MalaCards" id="RFX6"/>
<dbReference type="MIM" id="612659">
    <property type="type" value="gene"/>
</dbReference>
<dbReference type="MIM" id="615710">
    <property type="type" value="phenotype"/>
</dbReference>
<dbReference type="neXtProt" id="NX_Q8HWS3"/>
<dbReference type="OpenTargets" id="ENSG00000185002"/>
<dbReference type="Orphanet" id="293864">
    <property type="disease" value="Hypoplastic pancreas-intestinal atresia-hypoplastic gallbladder syndrome"/>
</dbReference>
<dbReference type="PharmGKB" id="PA162401254"/>
<dbReference type="VEuPathDB" id="HostDB:ENSG00000185002"/>
<dbReference type="eggNOG" id="KOG3712">
    <property type="taxonomic scope" value="Eukaryota"/>
</dbReference>
<dbReference type="GeneTree" id="ENSGT01050000244879"/>
<dbReference type="HOGENOM" id="CLU_013981_0_0_1"/>
<dbReference type="InParanoid" id="Q8HWS3"/>
<dbReference type="OMA" id="FAKNWEH"/>
<dbReference type="OrthoDB" id="10056949at2759"/>
<dbReference type="PAN-GO" id="Q8HWS3">
    <property type="GO annotations" value="3 GO annotations based on evolutionary models"/>
</dbReference>
<dbReference type="PhylomeDB" id="Q8HWS3"/>
<dbReference type="TreeFam" id="TF321340"/>
<dbReference type="PathwayCommons" id="Q8HWS3"/>
<dbReference type="Reactome" id="R-HSA-210745">
    <property type="pathway name" value="Regulation of gene expression in beta cells"/>
</dbReference>
<dbReference type="SignaLink" id="Q8HWS3"/>
<dbReference type="BioGRID-ORCS" id="222546">
    <property type="hits" value="15 hits in 1168 CRISPR screens"/>
</dbReference>
<dbReference type="GeneWiki" id="RFX6"/>
<dbReference type="GenomeRNAi" id="222546"/>
<dbReference type="Pharos" id="Q8HWS3">
    <property type="development level" value="Tbio"/>
</dbReference>
<dbReference type="PRO" id="PR:Q8HWS3"/>
<dbReference type="Proteomes" id="UP000005640">
    <property type="component" value="Chromosome 6"/>
</dbReference>
<dbReference type="RNAct" id="Q8HWS3">
    <property type="molecule type" value="protein"/>
</dbReference>
<dbReference type="Bgee" id="ENSG00000185002">
    <property type="expression patterns" value="Expressed in islet of Langerhans and 42 other cell types or tissues"/>
</dbReference>
<dbReference type="GO" id="GO:0000785">
    <property type="term" value="C:chromatin"/>
    <property type="evidence" value="ECO:0000247"/>
    <property type="project" value="NTNU_SB"/>
</dbReference>
<dbReference type="GO" id="GO:0005634">
    <property type="term" value="C:nucleus"/>
    <property type="evidence" value="ECO:0000314"/>
    <property type="project" value="UniProtKB"/>
</dbReference>
<dbReference type="GO" id="GO:0001228">
    <property type="term" value="F:DNA-binding transcription activator activity, RNA polymerase II-specific"/>
    <property type="evidence" value="ECO:0000314"/>
    <property type="project" value="NTNU_SB"/>
</dbReference>
<dbReference type="GO" id="GO:0000981">
    <property type="term" value="F:DNA-binding transcription factor activity, RNA polymerase II-specific"/>
    <property type="evidence" value="ECO:0000247"/>
    <property type="project" value="NTNU_SB"/>
</dbReference>
<dbReference type="GO" id="GO:0000978">
    <property type="term" value="F:RNA polymerase II cis-regulatory region sequence-specific DNA binding"/>
    <property type="evidence" value="ECO:0000318"/>
    <property type="project" value="GO_Central"/>
</dbReference>
<dbReference type="GO" id="GO:0000977">
    <property type="term" value="F:RNA polymerase II transcription regulatory region sequence-specific DNA binding"/>
    <property type="evidence" value="ECO:0000314"/>
    <property type="project" value="NTNU_SB"/>
</dbReference>
<dbReference type="GO" id="GO:0000976">
    <property type="term" value="F:transcription cis-regulatory region binding"/>
    <property type="evidence" value="ECO:0000314"/>
    <property type="project" value="UniProtKB"/>
</dbReference>
<dbReference type="GO" id="GO:0031018">
    <property type="term" value="P:endocrine pancreas development"/>
    <property type="evidence" value="ECO:0000315"/>
    <property type="project" value="UniProtKB"/>
</dbReference>
<dbReference type="GO" id="GO:0042593">
    <property type="term" value="P:glucose homeostasis"/>
    <property type="evidence" value="ECO:0000315"/>
    <property type="project" value="UniProtKB"/>
</dbReference>
<dbReference type="GO" id="GO:0003310">
    <property type="term" value="P:pancreatic A cell differentiation"/>
    <property type="evidence" value="ECO:0000250"/>
    <property type="project" value="UniProtKB"/>
</dbReference>
<dbReference type="GO" id="GO:0003311">
    <property type="term" value="P:pancreatic D cell differentiation"/>
    <property type="evidence" value="ECO:0000250"/>
    <property type="project" value="UniProtKB"/>
</dbReference>
<dbReference type="GO" id="GO:0090104">
    <property type="term" value="P:pancreatic epsilon cell differentiation"/>
    <property type="evidence" value="ECO:0000250"/>
    <property type="project" value="UniProtKB"/>
</dbReference>
<dbReference type="GO" id="GO:0045893">
    <property type="term" value="P:positive regulation of DNA-templated transcription"/>
    <property type="evidence" value="ECO:0000314"/>
    <property type="project" value="UniProtKB"/>
</dbReference>
<dbReference type="GO" id="GO:0035774">
    <property type="term" value="P:positive regulation of insulin secretion involved in cellular response to glucose stimulus"/>
    <property type="evidence" value="ECO:0000315"/>
    <property type="project" value="UniProtKB"/>
</dbReference>
<dbReference type="GO" id="GO:0045944">
    <property type="term" value="P:positive regulation of transcription by RNA polymerase II"/>
    <property type="evidence" value="ECO:0000314"/>
    <property type="project" value="NTNU_SB"/>
</dbReference>
<dbReference type="GO" id="GO:0050796">
    <property type="term" value="P:regulation of insulin secretion"/>
    <property type="evidence" value="ECO:0000315"/>
    <property type="project" value="UniProtKB"/>
</dbReference>
<dbReference type="GO" id="GO:0006357">
    <property type="term" value="P:regulation of transcription by RNA polymerase II"/>
    <property type="evidence" value="ECO:0000318"/>
    <property type="project" value="GO_Central"/>
</dbReference>
<dbReference type="GO" id="GO:0003309">
    <property type="term" value="P:type B pancreatic cell differentiation"/>
    <property type="evidence" value="ECO:0000250"/>
    <property type="project" value="UniProtKB"/>
</dbReference>
<dbReference type="FunFam" id="1.10.10.10:FF:000211">
    <property type="entry name" value="Regulatory factor X, 6"/>
    <property type="match status" value="1"/>
</dbReference>
<dbReference type="Gene3D" id="1.10.10.10">
    <property type="entry name" value="Winged helix-like DNA-binding domain superfamily/Winged helix DNA-binding domain"/>
    <property type="match status" value="1"/>
</dbReference>
<dbReference type="InterPro" id="IPR003150">
    <property type="entry name" value="DNA-bd_RFX"/>
</dbReference>
<dbReference type="InterPro" id="IPR039779">
    <property type="entry name" value="RFX-like"/>
</dbReference>
<dbReference type="InterPro" id="IPR036388">
    <property type="entry name" value="WH-like_DNA-bd_sf"/>
</dbReference>
<dbReference type="InterPro" id="IPR036390">
    <property type="entry name" value="WH_DNA-bd_sf"/>
</dbReference>
<dbReference type="PANTHER" id="PTHR12619:SF28">
    <property type="entry name" value="DNA-BINDING PROTEIN RFX6"/>
    <property type="match status" value="1"/>
</dbReference>
<dbReference type="PANTHER" id="PTHR12619">
    <property type="entry name" value="RFX TRANSCRIPTION FACTOR FAMILY"/>
    <property type="match status" value="1"/>
</dbReference>
<dbReference type="Pfam" id="PF25340">
    <property type="entry name" value="BCD_RFX"/>
    <property type="match status" value="1"/>
</dbReference>
<dbReference type="Pfam" id="PF02257">
    <property type="entry name" value="RFX_DNA_binding"/>
    <property type="match status" value="1"/>
</dbReference>
<dbReference type="SUPFAM" id="SSF46785">
    <property type="entry name" value="Winged helix' DNA-binding domain"/>
    <property type="match status" value="1"/>
</dbReference>
<dbReference type="PROSITE" id="PS51526">
    <property type="entry name" value="RFX_DBD"/>
    <property type="match status" value="1"/>
</dbReference>
<accession>Q8HWS3</accession>
<accession>Q5T6B3</accession>
<proteinExistence type="evidence at protein level"/>
<name>RFX6_HUMAN</name>
<reference key="1">
    <citation type="journal article" date="2003" name="Nature">
        <title>The DNA sequence and analysis of human chromosome 6.</title>
        <authorList>
            <person name="Mungall A.J."/>
            <person name="Palmer S.A."/>
            <person name="Sims S.K."/>
            <person name="Edwards C.A."/>
            <person name="Ashurst J.L."/>
            <person name="Wilming L."/>
            <person name="Jones M.C."/>
            <person name="Horton R."/>
            <person name="Hunt S.E."/>
            <person name="Scott C.E."/>
            <person name="Gilbert J.G.R."/>
            <person name="Clamp M.E."/>
            <person name="Bethel G."/>
            <person name="Milne S."/>
            <person name="Ainscough R."/>
            <person name="Almeida J.P."/>
            <person name="Ambrose K.D."/>
            <person name="Andrews T.D."/>
            <person name="Ashwell R.I.S."/>
            <person name="Babbage A.K."/>
            <person name="Bagguley C.L."/>
            <person name="Bailey J."/>
            <person name="Banerjee R."/>
            <person name="Barker D.J."/>
            <person name="Barlow K.F."/>
            <person name="Bates K."/>
            <person name="Beare D.M."/>
            <person name="Beasley H."/>
            <person name="Beasley O."/>
            <person name="Bird C.P."/>
            <person name="Blakey S.E."/>
            <person name="Bray-Allen S."/>
            <person name="Brook J."/>
            <person name="Brown A.J."/>
            <person name="Brown J.Y."/>
            <person name="Burford D.C."/>
            <person name="Burrill W."/>
            <person name="Burton J."/>
            <person name="Carder C."/>
            <person name="Carter N.P."/>
            <person name="Chapman J.C."/>
            <person name="Clark S.Y."/>
            <person name="Clark G."/>
            <person name="Clee C.M."/>
            <person name="Clegg S."/>
            <person name="Cobley V."/>
            <person name="Collier R.E."/>
            <person name="Collins J.E."/>
            <person name="Colman L.K."/>
            <person name="Corby N.R."/>
            <person name="Coville G.J."/>
            <person name="Culley K.M."/>
            <person name="Dhami P."/>
            <person name="Davies J."/>
            <person name="Dunn M."/>
            <person name="Earthrowl M.E."/>
            <person name="Ellington A.E."/>
            <person name="Evans K.A."/>
            <person name="Faulkner L."/>
            <person name="Francis M.D."/>
            <person name="Frankish A."/>
            <person name="Frankland J."/>
            <person name="French L."/>
            <person name="Garner P."/>
            <person name="Garnett J."/>
            <person name="Ghori M.J."/>
            <person name="Gilby L.M."/>
            <person name="Gillson C.J."/>
            <person name="Glithero R.J."/>
            <person name="Grafham D.V."/>
            <person name="Grant M."/>
            <person name="Gribble S."/>
            <person name="Griffiths C."/>
            <person name="Griffiths M.N.D."/>
            <person name="Hall R."/>
            <person name="Halls K.S."/>
            <person name="Hammond S."/>
            <person name="Harley J.L."/>
            <person name="Hart E.A."/>
            <person name="Heath P.D."/>
            <person name="Heathcott R."/>
            <person name="Holmes S.J."/>
            <person name="Howden P.J."/>
            <person name="Howe K.L."/>
            <person name="Howell G.R."/>
            <person name="Huckle E."/>
            <person name="Humphray S.J."/>
            <person name="Humphries M.D."/>
            <person name="Hunt A.R."/>
            <person name="Johnson C.M."/>
            <person name="Joy A.A."/>
            <person name="Kay M."/>
            <person name="Keenan S.J."/>
            <person name="Kimberley A.M."/>
            <person name="King A."/>
            <person name="Laird G.K."/>
            <person name="Langford C."/>
            <person name="Lawlor S."/>
            <person name="Leongamornlert D.A."/>
            <person name="Leversha M."/>
            <person name="Lloyd C.R."/>
            <person name="Lloyd D.M."/>
            <person name="Loveland J.E."/>
            <person name="Lovell J."/>
            <person name="Martin S."/>
            <person name="Mashreghi-Mohammadi M."/>
            <person name="Maslen G.L."/>
            <person name="Matthews L."/>
            <person name="McCann O.T."/>
            <person name="McLaren S.J."/>
            <person name="McLay K."/>
            <person name="McMurray A."/>
            <person name="Moore M.J.F."/>
            <person name="Mullikin J.C."/>
            <person name="Niblett D."/>
            <person name="Nickerson T."/>
            <person name="Novik K.L."/>
            <person name="Oliver K."/>
            <person name="Overton-Larty E.K."/>
            <person name="Parker A."/>
            <person name="Patel R."/>
            <person name="Pearce A.V."/>
            <person name="Peck A.I."/>
            <person name="Phillimore B.J.C.T."/>
            <person name="Phillips S."/>
            <person name="Plumb R.W."/>
            <person name="Porter K.M."/>
            <person name="Ramsey Y."/>
            <person name="Ranby S.A."/>
            <person name="Rice C.M."/>
            <person name="Ross M.T."/>
            <person name="Searle S.M."/>
            <person name="Sehra H.K."/>
            <person name="Sheridan E."/>
            <person name="Skuce C.D."/>
            <person name="Smith S."/>
            <person name="Smith M."/>
            <person name="Spraggon L."/>
            <person name="Squares S.L."/>
            <person name="Steward C.A."/>
            <person name="Sycamore N."/>
            <person name="Tamlyn-Hall G."/>
            <person name="Tester J."/>
            <person name="Theaker A.J."/>
            <person name="Thomas D.W."/>
            <person name="Thorpe A."/>
            <person name="Tracey A."/>
            <person name="Tromans A."/>
            <person name="Tubby B."/>
            <person name="Wall M."/>
            <person name="Wallis J.M."/>
            <person name="West A.P."/>
            <person name="White S.S."/>
            <person name="Whitehead S.L."/>
            <person name="Whittaker H."/>
            <person name="Wild A."/>
            <person name="Willey D.J."/>
            <person name="Wilmer T.E."/>
            <person name="Wood J.M."/>
            <person name="Wray P.W."/>
            <person name="Wyatt J.C."/>
            <person name="Young L."/>
            <person name="Younger R.M."/>
            <person name="Bentley D.R."/>
            <person name="Coulson A."/>
            <person name="Durbin R.M."/>
            <person name="Hubbard T."/>
            <person name="Sulston J.E."/>
            <person name="Dunham I."/>
            <person name="Rogers J."/>
            <person name="Beck S."/>
        </authorList>
    </citation>
    <scope>NUCLEOTIDE SEQUENCE [LARGE SCALE GENOMIC DNA]</scope>
</reference>
<reference key="2">
    <citation type="submission" date="2005-09" db="EMBL/GenBank/DDBJ databases">
        <authorList>
            <person name="Mural R.J."/>
            <person name="Istrail S."/>
            <person name="Sutton G.G."/>
            <person name="Florea L."/>
            <person name="Halpern A.L."/>
            <person name="Mobarry C.M."/>
            <person name="Lippert R."/>
            <person name="Walenz B."/>
            <person name="Shatkay H."/>
            <person name="Dew I."/>
            <person name="Miller J.R."/>
            <person name="Flanigan M.J."/>
            <person name="Edwards N.J."/>
            <person name="Bolanos R."/>
            <person name="Fasulo D."/>
            <person name="Halldorsson B.V."/>
            <person name="Hannenhalli S."/>
            <person name="Turner R."/>
            <person name="Yooseph S."/>
            <person name="Lu F."/>
            <person name="Nusskern D.R."/>
            <person name="Shue B.C."/>
            <person name="Zheng X.H."/>
            <person name="Zhong F."/>
            <person name="Delcher A.L."/>
            <person name="Huson D.H."/>
            <person name="Kravitz S.A."/>
            <person name="Mouchard L."/>
            <person name="Reinert K."/>
            <person name="Remington K.A."/>
            <person name="Clark A.G."/>
            <person name="Waterman M.S."/>
            <person name="Eichler E.E."/>
            <person name="Adams M.D."/>
            <person name="Hunkapiller M.W."/>
            <person name="Myers E.W."/>
            <person name="Venter J.C."/>
        </authorList>
    </citation>
    <scope>NUCLEOTIDE SEQUENCE [LARGE SCALE GENOMIC DNA]</scope>
</reference>
<reference key="3">
    <citation type="journal article" date="2004" name="Genome Res.">
        <title>The status, quality, and expansion of the NIH full-length cDNA project: the Mammalian Gene Collection (MGC).</title>
        <authorList>
            <consortium name="The MGC Project Team"/>
        </authorList>
    </citation>
    <scope>NUCLEOTIDE SEQUENCE [LARGE SCALE MRNA]</scope>
    <scope>VARIANTS LYS-6 AND ALA-688</scope>
    <source>
        <tissue>Testis</tissue>
    </source>
</reference>
<reference key="4">
    <citation type="journal article" date="2008" name="BMC Evol. Biol.">
        <title>Identification and characterization of novel human tissue-specific RFX transcription factors.</title>
        <authorList>
            <person name="Aftab S."/>
            <person name="Semenec L."/>
            <person name="Chu J.S.-C."/>
            <person name="Chen N."/>
        </authorList>
    </citation>
    <scope>IDENTIFICATION</scope>
</reference>
<reference key="5">
    <citation type="journal article" date="2010" name="Nature">
        <title>Rfx6 directs islet formation and insulin production in mice and humans.</title>
        <authorList>
            <person name="Smith S.B."/>
            <person name="Qu H.Q."/>
            <person name="Taleb N."/>
            <person name="Kishimoto N.Y."/>
            <person name="Scheel D.W."/>
            <person name="Lu Y."/>
            <person name="Patch A.M."/>
            <person name="Grabs R."/>
            <person name="Wang J."/>
            <person name="Lynn F.C."/>
            <person name="Miyatsuka T."/>
            <person name="Mitchell J."/>
            <person name="Seerke R."/>
            <person name="Desir J."/>
            <person name="Eijnden S.V."/>
            <person name="Abramowicz M."/>
            <person name="Kacet N."/>
            <person name="Weill J."/>
            <person name="Renard M.E."/>
            <person name="Gentile M."/>
            <person name="Hansen I."/>
            <person name="Dewar K."/>
            <person name="Hattersley A.T."/>
            <person name="Wang R."/>
            <person name="Wilson M.E."/>
            <person name="Johnson J.D."/>
            <person name="Polychronakos C."/>
            <person name="German M.S."/>
        </authorList>
    </citation>
    <scope>FUNCTION</scope>
    <scope>DNA-BINDING</scope>
    <scope>TISSUE SPECIFICITY</scope>
    <scope>VARIANTS MTCHRS GLN-181 AND PRO-217</scope>
    <scope>CHARACTERIZATION OF VARIANTS MTCHRS GLN-181 AND PRO-217</scope>
</reference>
<reference key="6">
    <citation type="journal article" date="2014" name="Cell Rep.">
        <title>RFX6 regulates insulin secretion by modulating Ca2+ homeostasis in human beta cells.</title>
        <authorList>
            <person name="Chandra V."/>
            <person name="Albagli-Curiel O."/>
            <person name="Hastoy B."/>
            <person name="Piccand J."/>
            <person name="Randriamampita C."/>
            <person name="Vaillant E."/>
            <person name="Cave H."/>
            <person name="Busiah K."/>
            <person name="Froguel P."/>
            <person name="Vaxillaire M."/>
            <person name="Rorsman P."/>
            <person name="Polak M."/>
            <person name="Scharfmann R."/>
        </authorList>
    </citation>
    <scope>VARIANT MTCHRS GLY-506</scope>
    <scope>CHARACTERIZATION OF VARIANT MTCHRS GLY-506</scope>
    <scope>FUNCTION</scope>
    <scope>SUBCELLULAR LOCATION</scope>
    <scope>TISSUE SPECIFICITY</scope>
</reference>
<protein>
    <recommendedName>
        <fullName>DNA-binding protein RFX6</fullName>
    </recommendedName>
    <alternativeName>
        <fullName>Regulatory factor X 6</fullName>
    </alternativeName>
    <alternativeName>
        <fullName>Regulatory factor X domain-containing protein 1</fullName>
    </alternativeName>
</protein>
<keyword id="KW-0217">Developmental protein</keyword>
<keyword id="KW-0219">Diabetes mellitus</keyword>
<keyword id="KW-0221">Differentiation</keyword>
<keyword id="KW-0225">Disease variant</keyword>
<keyword id="KW-0238">DNA-binding</keyword>
<keyword id="KW-0539">Nucleus</keyword>
<keyword id="KW-1267">Proteomics identification</keyword>
<keyword id="KW-1185">Reference proteome</keyword>
<keyword id="KW-0804">Transcription</keyword>
<keyword id="KW-0805">Transcription regulation</keyword>